<name>CUTC_ECOSM</name>
<protein>
    <recommendedName>
        <fullName evidence="1">PF03932 family protein CutC</fullName>
    </recommendedName>
</protein>
<dbReference type="EMBL" id="CP000970">
    <property type="protein sequence ID" value="ACB17105.1"/>
    <property type="molecule type" value="Genomic_DNA"/>
</dbReference>
<dbReference type="RefSeq" id="WP_001185729.1">
    <property type="nucleotide sequence ID" value="NC_010498.1"/>
</dbReference>
<dbReference type="SMR" id="B1LCZ7"/>
<dbReference type="KEGG" id="ecm:EcSMS35_1312"/>
<dbReference type="HOGENOM" id="CLU_050555_3_1_6"/>
<dbReference type="Proteomes" id="UP000007011">
    <property type="component" value="Chromosome"/>
</dbReference>
<dbReference type="GO" id="GO:0005737">
    <property type="term" value="C:cytoplasm"/>
    <property type="evidence" value="ECO:0007669"/>
    <property type="project" value="UniProtKB-SubCell"/>
</dbReference>
<dbReference type="GO" id="GO:0005507">
    <property type="term" value="F:copper ion binding"/>
    <property type="evidence" value="ECO:0007669"/>
    <property type="project" value="TreeGrafter"/>
</dbReference>
<dbReference type="FunFam" id="3.20.20.380:FF:000001">
    <property type="entry name" value="Copper homeostasis protein CutC"/>
    <property type="match status" value="1"/>
</dbReference>
<dbReference type="Gene3D" id="3.20.20.380">
    <property type="entry name" value="Copper homeostasis (CutC) domain"/>
    <property type="match status" value="1"/>
</dbReference>
<dbReference type="HAMAP" id="MF_00795">
    <property type="entry name" value="CutC"/>
    <property type="match status" value="1"/>
</dbReference>
<dbReference type="InterPro" id="IPR005627">
    <property type="entry name" value="CutC-like"/>
</dbReference>
<dbReference type="InterPro" id="IPR036822">
    <property type="entry name" value="CutC-like_dom_sf"/>
</dbReference>
<dbReference type="NCBIfam" id="NF008603">
    <property type="entry name" value="PRK11572.1"/>
    <property type="match status" value="1"/>
</dbReference>
<dbReference type="PANTHER" id="PTHR12598">
    <property type="entry name" value="COPPER HOMEOSTASIS PROTEIN CUTC"/>
    <property type="match status" value="1"/>
</dbReference>
<dbReference type="PANTHER" id="PTHR12598:SF0">
    <property type="entry name" value="COPPER HOMEOSTASIS PROTEIN CUTC HOMOLOG"/>
    <property type="match status" value="1"/>
</dbReference>
<dbReference type="Pfam" id="PF03932">
    <property type="entry name" value="CutC"/>
    <property type="match status" value="1"/>
</dbReference>
<dbReference type="SUPFAM" id="SSF110395">
    <property type="entry name" value="CutC-like"/>
    <property type="match status" value="1"/>
</dbReference>
<evidence type="ECO:0000255" key="1">
    <source>
        <dbReference type="HAMAP-Rule" id="MF_00795"/>
    </source>
</evidence>
<keyword id="KW-0963">Cytoplasm</keyword>
<gene>
    <name evidence="1" type="primary">cutC</name>
    <name type="ordered locus">EcSMS35_1312</name>
</gene>
<accession>B1LCZ7</accession>
<reference key="1">
    <citation type="journal article" date="2008" name="J. Bacteriol.">
        <title>Insights into the environmental resistance gene pool from the genome sequence of the multidrug-resistant environmental isolate Escherichia coli SMS-3-5.</title>
        <authorList>
            <person name="Fricke W.F."/>
            <person name="Wright M.S."/>
            <person name="Lindell A.H."/>
            <person name="Harkins D.M."/>
            <person name="Baker-Austin C."/>
            <person name="Ravel J."/>
            <person name="Stepanauskas R."/>
        </authorList>
    </citation>
    <scope>NUCLEOTIDE SEQUENCE [LARGE SCALE GENOMIC DNA]</scope>
    <source>
        <strain>SMS-3-5 / SECEC</strain>
    </source>
</reference>
<feature type="chain" id="PRO_1000133837" description="PF03932 family protein CutC">
    <location>
        <begin position="1"/>
        <end position="248"/>
    </location>
</feature>
<comment type="subunit">
    <text evidence="1">Homodimer.</text>
</comment>
<comment type="subcellular location">
    <subcellularLocation>
        <location evidence="1">Cytoplasm</location>
    </subcellularLocation>
</comment>
<comment type="similarity">
    <text evidence="1">Belongs to the CutC family.</text>
</comment>
<comment type="caution">
    <text evidence="1">Once thought to be involved in copper homeostasis, experiments in E.coli have shown this is not the case.</text>
</comment>
<proteinExistence type="inferred from homology"/>
<sequence>MALLEICCYSMECALTAQQNGADRVELCAAPKEGGLTPSLGVLKSVRQRVTIPVHPIIRPRGGDFCYSDGEFAAILEDVRTVRELGFPGLVTGVLDVDGNVDMPRMEKIMAAAGPLAVTFHRAFDMCANPLNTLNNLAELGITRVLTSGQKSDALQGLSKIMELIAHGDAPIIMAGAGIRAENLHHFLDAGVLEVHSSAGAWQASPMRYRNQGLSMSSDAHADEYSRYVVDGAAVAEMKGIIERHQAK</sequence>
<organism>
    <name type="scientific">Escherichia coli (strain SMS-3-5 / SECEC)</name>
    <dbReference type="NCBI Taxonomy" id="439855"/>
    <lineage>
        <taxon>Bacteria</taxon>
        <taxon>Pseudomonadati</taxon>
        <taxon>Pseudomonadota</taxon>
        <taxon>Gammaproteobacteria</taxon>
        <taxon>Enterobacterales</taxon>
        <taxon>Enterobacteriaceae</taxon>
        <taxon>Escherichia</taxon>
    </lineage>
</organism>